<organism>
    <name type="scientific">Escherichia coli (strain K12 / MC4100 / BW2952)</name>
    <dbReference type="NCBI Taxonomy" id="595496"/>
    <lineage>
        <taxon>Bacteria</taxon>
        <taxon>Pseudomonadati</taxon>
        <taxon>Pseudomonadota</taxon>
        <taxon>Gammaproteobacteria</taxon>
        <taxon>Enterobacterales</taxon>
        <taxon>Enterobacteriaceae</taxon>
        <taxon>Escherichia</taxon>
    </lineage>
</organism>
<protein>
    <recommendedName>
        <fullName evidence="1">3-methyl-2-oxobutanoate hydroxymethyltransferase</fullName>
        <ecNumber evidence="1">2.1.2.11</ecNumber>
    </recommendedName>
    <alternativeName>
        <fullName evidence="1">Ketopantoate hydroxymethyltransferase</fullName>
        <shortName evidence="1">KPHMT</shortName>
    </alternativeName>
</protein>
<sequence>MKPTTISLLQKYKQEKKRFATITAYDYSFAKLFADEGLNVMLVGDSLGMTVQGHDSTLPVTVADIAYHTAAVRRGAPNCLLLADLPFMAYATPEQAFENAATVMRAGANMVKIEGGEWLVETVQMLTERAVPVCGHLGLTPQSVNIFGGYKVQGRGDEAGDQLLSDALALEAAGAQLLVLECVPVELAKRITEALAIPVIGIGAGNVTDGQILVMHDAFGITGGHIPKFAKNFLAETGDIRAAVRQYMAEVESGVYPGEEHSFH</sequence>
<dbReference type="EC" id="2.1.2.11" evidence="1"/>
<dbReference type="EMBL" id="CP001396">
    <property type="protein sequence ID" value="ACR61821.1"/>
    <property type="molecule type" value="Genomic_DNA"/>
</dbReference>
<dbReference type="RefSeq" id="WP_000805497.1">
    <property type="nucleotide sequence ID" value="NC_012759.1"/>
</dbReference>
<dbReference type="SMR" id="C4ZRM7"/>
<dbReference type="KEGG" id="ebw:BWG_0127"/>
<dbReference type="HOGENOM" id="CLU_036645_1_0_6"/>
<dbReference type="UniPathway" id="UPA00028">
    <property type="reaction ID" value="UER00003"/>
</dbReference>
<dbReference type="GO" id="GO:0005737">
    <property type="term" value="C:cytoplasm"/>
    <property type="evidence" value="ECO:0007669"/>
    <property type="project" value="UniProtKB-SubCell"/>
</dbReference>
<dbReference type="GO" id="GO:0003864">
    <property type="term" value="F:3-methyl-2-oxobutanoate hydroxymethyltransferase activity"/>
    <property type="evidence" value="ECO:0007669"/>
    <property type="project" value="UniProtKB-UniRule"/>
</dbReference>
<dbReference type="GO" id="GO:0000287">
    <property type="term" value="F:magnesium ion binding"/>
    <property type="evidence" value="ECO:0007669"/>
    <property type="project" value="TreeGrafter"/>
</dbReference>
<dbReference type="GO" id="GO:0015940">
    <property type="term" value="P:pantothenate biosynthetic process"/>
    <property type="evidence" value="ECO:0007669"/>
    <property type="project" value="UniProtKB-UniRule"/>
</dbReference>
<dbReference type="CDD" id="cd06557">
    <property type="entry name" value="KPHMT-like"/>
    <property type="match status" value="1"/>
</dbReference>
<dbReference type="FunFam" id="3.20.20.60:FF:000003">
    <property type="entry name" value="3-methyl-2-oxobutanoate hydroxymethyltransferase"/>
    <property type="match status" value="1"/>
</dbReference>
<dbReference type="Gene3D" id="3.20.20.60">
    <property type="entry name" value="Phosphoenolpyruvate-binding domains"/>
    <property type="match status" value="1"/>
</dbReference>
<dbReference type="HAMAP" id="MF_00156">
    <property type="entry name" value="PanB"/>
    <property type="match status" value="1"/>
</dbReference>
<dbReference type="InterPro" id="IPR003700">
    <property type="entry name" value="Pantoate_hydroxy_MeTrfase"/>
</dbReference>
<dbReference type="InterPro" id="IPR015813">
    <property type="entry name" value="Pyrv/PenolPyrv_kinase-like_dom"/>
</dbReference>
<dbReference type="InterPro" id="IPR040442">
    <property type="entry name" value="Pyrv_kinase-like_dom_sf"/>
</dbReference>
<dbReference type="NCBIfam" id="TIGR00222">
    <property type="entry name" value="panB"/>
    <property type="match status" value="1"/>
</dbReference>
<dbReference type="NCBIfam" id="NF001452">
    <property type="entry name" value="PRK00311.1"/>
    <property type="match status" value="1"/>
</dbReference>
<dbReference type="PANTHER" id="PTHR20881">
    <property type="entry name" value="3-METHYL-2-OXOBUTANOATE HYDROXYMETHYLTRANSFERASE"/>
    <property type="match status" value="1"/>
</dbReference>
<dbReference type="PANTHER" id="PTHR20881:SF0">
    <property type="entry name" value="3-METHYL-2-OXOBUTANOATE HYDROXYMETHYLTRANSFERASE"/>
    <property type="match status" value="1"/>
</dbReference>
<dbReference type="Pfam" id="PF02548">
    <property type="entry name" value="Pantoate_transf"/>
    <property type="match status" value="1"/>
</dbReference>
<dbReference type="PIRSF" id="PIRSF000388">
    <property type="entry name" value="Pantoate_hydroxy_MeTrfase"/>
    <property type="match status" value="1"/>
</dbReference>
<dbReference type="SUPFAM" id="SSF51621">
    <property type="entry name" value="Phosphoenolpyruvate/pyruvate domain"/>
    <property type="match status" value="1"/>
</dbReference>
<accession>C4ZRM7</accession>
<feature type="chain" id="PRO_1000203470" description="3-methyl-2-oxobutanoate hydroxymethyltransferase">
    <location>
        <begin position="1"/>
        <end position="264"/>
    </location>
</feature>
<feature type="active site" description="Proton acceptor" evidence="1">
    <location>
        <position position="181"/>
    </location>
</feature>
<feature type="binding site" evidence="1">
    <location>
        <begin position="45"/>
        <end position="46"/>
    </location>
    <ligand>
        <name>3-methyl-2-oxobutanoate</name>
        <dbReference type="ChEBI" id="CHEBI:11851"/>
    </ligand>
</feature>
<feature type="binding site" evidence="1">
    <location>
        <position position="45"/>
    </location>
    <ligand>
        <name>Mg(2+)</name>
        <dbReference type="ChEBI" id="CHEBI:18420"/>
    </ligand>
</feature>
<feature type="binding site" evidence="1">
    <location>
        <position position="84"/>
    </location>
    <ligand>
        <name>3-methyl-2-oxobutanoate</name>
        <dbReference type="ChEBI" id="CHEBI:11851"/>
    </ligand>
</feature>
<feature type="binding site" evidence="1">
    <location>
        <position position="84"/>
    </location>
    <ligand>
        <name>Mg(2+)</name>
        <dbReference type="ChEBI" id="CHEBI:18420"/>
    </ligand>
</feature>
<feature type="binding site" evidence="1">
    <location>
        <position position="112"/>
    </location>
    <ligand>
        <name>3-methyl-2-oxobutanoate</name>
        <dbReference type="ChEBI" id="CHEBI:11851"/>
    </ligand>
</feature>
<feature type="binding site" evidence="1">
    <location>
        <position position="114"/>
    </location>
    <ligand>
        <name>Mg(2+)</name>
        <dbReference type="ChEBI" id="CHEBI:18420"/>
    </ligand>
</feature>
<reference key="1">
    <citation type="journal article" date="2009" name="J. Bacteriol.">
        <title>Genomic sequencing reveals regulatory mutations and recombinational events in the widely used MC4100 lineage of Escherichia coli K-12.</title>
        <authorList>
            <person name="Ferenci T."/>
            <person name="Zhou Z."/>
            <person name="Betteridge T."/>
            <person name="Ren Y."/>
            <person name="Liu Y."/>
            <person name="Feng L."/>
            <person name="Reeves P.R."/>
            <person name="Wang L."/>
        </authorList>
    </citation>
    <scope>NUCLEOTIDE SEQUENCE [LARGE SCALE GENOMIC DNA]</scope>
    <source>
        <strain>K12 / MC4100 / BW2952</strain>
    </source>
</reference>
<name>PANB_ECOBW</name>
<comment type="function">
    <text evidence="1">Catalyzes the reversible reaction in which hydroxymethyl group from 5,10-methylenetetrahydrofolate is transferred onto alpha-ketoisovalerate to form ketopantoate.</text>
</comment>
<comment type="catalytic activity">
    <reaction evidence="1">
        <text>3-methyl-2-oxobutanoate + (6R)-5,10-methylene-5,6,7,8-tetrahydrofolate + H2O = 2-dehydropantoate + (6S)-5,6,7,8-tetrahydrofolate</text>
        <dbReference type="Rhea" id="RHEA:11824"/>
        <dbReference type="ChEBI" id="CHEBI:11561"/>
        <dbReference type="ChEBI" id="CHEBI:11851"/>
        <dbReference type="ChEBI" id="CHEBI:15377"/>
        <dbReference type="ChEBI" id="CHEBI:15636"/>
        <dbReference type="ChEBI" id="CHEBI:57453"/>
        <dbReference type="EC" id="2.1.2.11"/>
    </reaction>
</comment>
<comment type="cofactor">
    <cofactor evidence="1">
        <name>Mg(2+)</name>
        <dbReference type="ChEBI" id="CHEBI:18420"/>
    </cofactor>
    <text evidence="1">Binds 1 Mg(2+) ion per subunit.</text>
</comment>
<comment type="pathway">
    <text evidence="1">Cofactor biosynthesis; (R)-pantothenate biosynthesis; (R)-pantoate from 3-methyl-2-oxobutanoate: step 1/2.</text>
</comment>
<comment type="subunit">
    <text evidence="1">Homodecamer; pentamer of dimers.</text>
</comment>
<comment type="subcellular location">
    <subcellularLocation>
        <location evidence="1">Cytoplasm</location>
    </subcellularLocation>
</comment>
<comment type="similarity">
    <text evidence="1">Belongs to the PanB family.</text>
</comment>
<evidence type="ECO:0000255" key="1">
    <source>
        <dbReference type="HAMAP-Rule" id="MF_00156"/>
    </source>
</evidence>
<gene>
    <name evidence="1" type="primary">panB</name>
    <name type="ordered locus">BWG_0127</name>
</gene>
<keyword id="KW-0963">Cytoplasm</keyword>
<keyword id="KW-0460">Magnesium</keyword>
<keyword id="KW-0479">Metal-binding</keyword>
<keyword id="KW-0566">Pantothenate biosynthesis</keyword>
<keyword id="KW-0808">Transferase</keyword>
<proteinExistence type="inferred from homology"/>